<sequence>MAGRSGDSDEDLLRTVRLIKVLYQSNPPPSSEGTRQARRNRRRRWRERQRQIRSISGWLLSNYLGRPTEPVPFQLPPLERLTLDCNEDCGTSGTQGVGSPQILVESPPVLDSGTKE</sequence>
<reference key="1">
    <citation type="journal article" date="1992" name="J. Virol.">
        <title>Complete nucleotide sequence, genome organization, and biological properties of human immunodeficiency virus type 1 in vivo: evidence for limited defectiveness and complementation.</title>
        <authorList>
            <person name="Li Y."/>
            <person name="Hui H."/>
            <person name="Burgess C.J."/>
            <person name="Price R.W."/>
            <person name="Sharp P.M."/>
            <person name="Hahn B.H."/>
            <person name="Shaw G.M."/>
        </authorList>
    </citation>
    <scope>NUCLEOTIDE SEQUENCE [GENOMIC RNA]</scope>
</reference>
<reference key="2">
    <citation type="journal article" date="1999" name="Arch. Biochem. Biophys.">
        <title>The ins and outs of HIV Rev.</title>
        <authorList>
            <person name="Hope T.J."/>
        </authorList>
    </citation>
    <scope>REVIEW</scope>
</reference>
<protein>
    <recommendedName>
        <fullName evidence="1">Protein Rev</fullName>
    </recommendedName>
    <alternativeName>
        <fullName evidence="1">ART/TRS</fullName>
    </alternativeName>
    <alternativeName>
        <fullName evidence="1">Anti-repression transactivator</fullName>
    </alternativeName>
    <alternativeName>
        <fullName evidence="1">Regulator of expression of viral proteins</fullName>
    </alternativeName>
</protein>
<name>REV_HV1Y2</name>
<proteinExistence type="inferred from homology"/>
<dbReference type="EMBL" id="M93258">
    <property type="status" value="NOT_ANNOTATED_CDS"/>
    <property type="molecule type" value="Genomic_RNA"/>
</dbReference>
<dbReference type="PIR" id="F44001">
    <property type="entry name" value="F44001"/>
</dbReference>
<dbReference type="Proteomes" id="UP000007419">
    <property type="component" value="Genome"/>
</dbReference>
<dbReference type="GO" id="GO:0030430">
    <property type="term" value="C:host cell cytoplasm"/>
    <property type="evidence" value="ECO:0007669"/>
    <property type="project" value="UniProtKB-SubCell"/>
</dbReference>
<dbReference type="GO" id="GO:0044196">
    <property type="term" value="C:host cell nucleolus"/>
    <property type="evidence" value="ECO:0007669"/>
    <property type="project" value="UniProtKB-SubCell"/>
</dbReference>
<dbReference type="GO" id="GO:0003700">
    <property type="term" value="F:DNA-binding transcription factor activity"/>
    <property type="evidence" value="ECO:0007669"/>
    <property type="project" value="UniProtKB-UniRule"/>
</dbReference>
<dbReference type="GO" id="GO:0003723">
    <property type="term" value="F:RNA binding"/>
    <property type="evidence" value="ECO:0007669"/>
    <property type="project" value="UniProtKB-UniRule"/>
</dbReference>
<dbReference type="GO" id="GO:0051028">
    <property type="term" value="P:mRNA transport"/>
    <property type="evidence" value="ECO:0007669"/>
    <property type="project" value="UniProtKB-UniRule"/>
</dbReference>
<dbReference type="GO" id="GO:0016032">
    <property type="term" value="P:viral process"/>
    <property type="evidence" value="ECO:0007669"/>
    <property type="project" value="UniProtKB-UniRule"/>
</dbReference>
<dbReference type="Gene3D" id="6.10.140.630">
    <property type="match status" value="1"/>
</dbReference>
<dbReference type="HAMAP" id="MF_04077">
    <property type="entry name" value="REV_HIV1"/>
    <property type="match status" value="1"/>
</dbReference>
<dbReference type="InterPro" id="IPR000625">
    <property type="entry name" value="REV_protein"/>
</dbReference>
<dbReference type="Pfam" id="PF00424">
    <property type="entry name" value="REV"/>
    <property type="match status" value="1"/>
</dbReference>
<gene>
    <name evidence="1" type="primary">rev</name>
</gene>
<keyword id="KW-0014">AIDS</keyword>
<keyword id="KW-1035">Host cytoplasm</keyword>
<keyword id="KW-1048">Host nucleus</keyword>
<keyword id="KW-0945">Host-virus interaction</keyword>
<keyword id="KW-0488">Methylation</keyword>
<keyword id="KW-0509">mRNA transport</keyword>
<keyword id="KW-0597">Phosphoprotein</keyword>
<keyword id="KW-0694">RNA-binding</keyword>
<keyword id="KW-0813">Transport</keyword>
<accession>P35960</accession>
<comment type="function">
    <text evidence="1">Escorts unspliced or incompletely spliced viral pre-mRNAs (late transcripts) out of the nucleus of infected cells. These pre-mRNAs carry a recognition sequence called Rev responsive element (RRE) located in the env gene, that is not present in fully spliced viral mRNAs (early transcripts). This function is essential since most viral proteins are translated from unspliced or partially spliced pre-mRNAs which cannot exit the nucleus by the pathway used by fully processed cellular mRNAs. Rev itself is translated from a fully spliced mRNA that readily exits the nucleus. Rev's nuclear localization signal (NLS) binds directly to KPNB1/Importin beta-1 without previous binding to KPNA1/Importin alpha-1. KPNB1 binds to the GDP bound form of RAN (Ran-GDP) and targets Rev to the nucleus. In the nucleus, the conversion from Ran-GDP to Ran-GTP dissociates Rev from KPNB1 and allows Rev's binding to the RRE in viral pre-mRNAs. Rev multimerization on the RRE via cooperative assembly exposes its nuclear export signal (NES) to the surface. Rev can then form a complex with XPO1/CRM1 and Ran-GTP, leading to nuclear export of the complex. Conversion from Ran-GTP to Ran-GDP mediates dissociation of the Rev/RRE/XPO1/RAN complex, so that Rev can return to the nucleus for a subsequent round of export. Beside KPNB1, also seems to interact with TNPO1/Transportin-1, RANBP5/IPO5 and IPO7/RANBP7 for nuclear import. The nucleoporin-like HRB/RIP is an essential cofactor that probably indirectly interacts with Rev to release HIV RNAs from the perinuclear region to the cytoplasm.</text>
</comment>
<comment type="subunit">
    <text evidence="1">Homomultimer; when bound to the RRE. Multimeric assembly is essential for activity and may involve XPO1. Binds to human KPNB1, XPO1, TNPO1, RANBP5 and IPO7. Interacts with the viral Integrase. Interacts with human KHDRBS1. Interacts with human NAP1; this interaction decreases Rev multimerization and stimulates its activity. Interacts with human DEAD-box helicases DDX3 and DDX24; these interactions may serve for viral RNA export to the cytoplasm and packaging, respectively. Interacts with human PSIP1; this interaction may inhibit HIV-1 DNA integration by promoting dissociation of the Integrase-LEDGF/p75 complex.</text>
</comment>
<comment type="subcellular location">
    <subcellularLocation>
        <location evidence="1">Host nucleus</location>
        <location evidence="1">Host nucleolus</location>
    </subcellularLocation>
    <subcellularLocation>
        <location evidence="1">Host cytoplasm</location>
    </subcellularLocation>
    <text evidence="1">The presence of both nuclear import and nuclear export signals leads to continuous shuttling between the nucleus and cytoplasm.</text>
</comment>
<comment type="domain">
    <text evidence="1">The RNA-binding motif binds to the RRE, a 240 bp stem-and-loop structure present in incompletely spliced viral pre-mRNAs. This region also contains the NLS which mediates nuclear localization via KPNB1 binding and, when the N-terminal sequence is present, nucleolar targeting. These overlapping functions prevent Rev bound to RRE from undesirable return to the nucleus. When Rev binds the RRE, the NLS becomes masked while the NES remains accessible. The leucine-rich NES mediates binding to human XPO1.</text>
</comment>
<comment type="PTM">
    <text evidence="1">Asymmetrically arginine dimethylated at one site by host PRMT6. Methylation impairs the RNA-binding activity and export of viral RNA from the nucleus to the cytoplasm.</text>
</comment>
<comment type="PTM">
    <text evidence="1">Phosphorylated by protein kinase CK2. Presence of, and maybe binding to the N-terminus of the regulatory beta subunit of CK2 is necessary for CK2-mediated Rev's phosphorylation.</text>
</comment>
<comment type="miscellaneous">
    <text evidence="1">HIV-1 lineages are divided in three main groups, M (for Major), O (for Outlier), and N (for New, or Non-M, Non-O). The vast majority of strains found worldwide belong to the group M. Group O seems to be endemic to and largely confined to Cameroon and neighboring countries in West Central Africa, where these viruses represent a small minority of HIV-1 strains. The group N is represented by a limited number of isolates from Cameroonian persons. The group M is further subdivided in 9 clades or subtypes (A to D, F to H, J and K).</text>
</comment>
<comment type="similarity">
    <text evidence="1">Belongs to the HIV-1 REV protein family.</text>
</comment>
<evidence type="ECO:0000255" key="1">
    <source>
        <dbReference type="HAMAP-Rule" id="MF_04077"/>
    </source>
</evidence>
<evidence type="ECO:0000256" key="2">
    <source>
        <dbReference type="SAM" id="MobiDB-lite"/>
    </source>
</evidence>
<feature type="chain" id="PRO_0000085254" description="Protein Rev">
    <location>
        <begin position="1"/>
        <end position="116"/>
    </location>
</feature>
<feature type="region of interest" description="Homomultimerization" evidence="1">
    <location>
        <begin position="18"/>
        <end position="26"/>
    </location>
</feature>
<feature type="region of interest" description="Disordered" evidence="2">
    <location>
        <begin position="23"/>
        <end position="48"/>
    </location>
</feature>
<feature type="region of interest" description="Disordered" evidence="2">
    <location>
        <begin position="90"/>
        <end position="116"/>
    </location>
</feature>
<feature type="short sequence motif" description="Nuclear localization signal and RNA-binding (RRE)" evidence="1">
    <location>
        <begin position="34"/>
        <end position="50"/>
    </location>
</feature>
<feature type="short sequence motif" description="Nuclear export signal and binding to XPO1" evidence="1">
    <location>
        <begin position="73"/>
        <end position="84"/>
    </location>
</feature>
<feature type="compositionally biased region" description="Basic residues" evidence="2">
    <location>
        <begin position="36"/>
        <end position="47"/>
    </location>
</feature>
<feature type="modified residue" description="Phosphoserine; by host CK2" evidence="1">
    <location>
        <position position="5"/>
    </location>
</feature>
<feature type="modified residue" description="Phosphoserine; by host CK2" evidence="1">
    <location>
        <position position="8"/>
    </location>
</feature>
<feature type="modified residue" description="Phosphoserine; by host" evidence="1">
    <location>
        <position position="92"/>
    </location>
</feature>
<feature type="modified residue" description="Phosphoserine; by host" evidence="1">
    <location>
        <position position="99"/>
    </location>
</feature>
<organism>
    <name type="scientific">Human immunodeficiency virus type 1 group M subtype B (isolate YU-2)</name>
    <name type="common">HIV-1</name>
    <dbReference type="NCBI Taxonomy" id="362651"/>
    <lineage>
        <taxon>Viruses</taxon>
        <taxon>Riboviria</taxon>
        <taxon>Pararnavirae</taxon>
        <taxon>Artverviricota</taxon>
        <taxon>Revtraviricetes</taxon>
        <taxon>Ortervirales</taxon>
        <taxon>Retroviridae</taxon>
        <taxon>Orthoretrovirinae</taxon>
        <taxon>Lentivirus</taxon>
        <taxon>Human immunodeficiency virus type 1</taxon>
    </lineage>
</organism>
<organismHost>
    <name type="scientific">Homo sapiens</name>
    <name type="common">Human</name>
    <dbReference type="NCBI Taxonomy" id="9606"/>
</organismHost>